<name>ATPE_SINMW</name>
<protein>
    <recommendedName>
        <fullName evidence="1">ATP synthase epsilon chain</fullName>
    </recommendedName>
    <alternativeName>
        <fullName evidence="1">ATP synthase F1 sector epsilon subunit</fullName>
    </alternativeName>
    <alternativeName>
        <fullName evidence="1">F-ATPase epsilon subunit</fullName>
    </alternativeName>
</protein>
<evidence type="ECO:0000255" key="1">
    <source>
        <dbReference type="HAMAP-Rule" id="MF_00530"/>
    </source>
</evidence>
<keyword id="KW-0066">ATP synthesis</keyword>
<keyword id="KW-0997">Cell inner membrane</keyword>
<keyword id="KW-1003">Cell membrane</keyword>
<keyword id="KW-0139">CF(1)</keyword>
<keyword id="KW-0375">Hydrogen ion transport</keyword>
<keyword id="KW-0406">Ion transport</keyword>
<keyword id="KW-0472">Membrane</keyword>
<keyword id="KW-0813">Transport</keyword>
<proteinExistence type="inferred from homology"/>
<reference key="1">
    <citation type="submission" date="2007-06" db="EMBL/GenBank/DDBJ databases">
        <title>Complete sequence of Sinorhizobium medicae WSM419 chromosome.</title>
        <authorList>
            <consortium name="US DOE Joint Genome Institute"/>
            <person name="Copeland A."/>
            <person name="Lucas S."/>
            <person name="Lapidus A."/>
            <person name="Barry K."/>
            <person name="Glavina del Rio T."/>
            <person name="Dalin E."/>
            <person name="Tice H."/>
            <person name="Pitluck S."/>
            <person name="Chain P."/>
            <person name="Malfatti S."/>
            <person name="Shin M."/>
            <person name="Vergez L."/>
            <person name="Schmutz J."/>
            <person name="Larimer F."/>
            <person name="Land M."/>
            <person name="Hauser L."/>
            <person name="Kyrpides N."/>
            <person name="Mikhailova N."/>
            <person name="Reeve W.G."/>
            <person name="Richardson P."/>
        </authorList>
    </citation>
    <scope>NUCLEOTIDE SEQUENCE [LARGE SCALE GENOMIC DNA]</scope>
    <source>
        <strain>WSM419</strain>
    </source>
</reference>
<comment type="function">
    <text evidence="1">Produces ATP from ADP in the presence of a proton gradient across the membrane.</text>
</comment>
<comment type="subunit">
    <text evidence="1">F-type ATPases have 2 components, CF(1) - the catalytic core - and CF(0) - the membrane proton channel. CF(1) has five subunits: alpha(3), beta(3), gamma(1), delta(1), epsilon(1). CF(0) has three main subunits: a, b and c.</text>
</comment>
<comment type="subcellular location">
    <subcellularLocation>
        <location evidence="1">Cell inner membrane</location>
        <topology evidence="1">Peripheral membrane protein</topology>
    </subcellularLocation>
</comment>
<comment type="similarity">
    <text evidence="1">Belongs to the ATPase epsilon chain family.</text>
</comment>
<gene>
    <name evidence="1" type="primary">atpC</name>
    <name type="ordered locus">Smed_2921</name>
</gene>
<feature type="chain" id="PRO_1000056537" description="ATP synthase epsilon chain">
    <location>
        <begin position="1"/>
        <end position="134"/>
    </location>
</feature>
<accession>A6UDM0</accession>
<organism>
    <name type="scientific">Sinorhizobium medicae (strain WSM419)</name>
    <name type="common">Ensifer medicae</name>
    <dbReference type="NCBI Taxonomy" id="366394"/>
    <lineage>
        <taxon>Bacteria</taxon>
        <taxon>Pseudomonadati</taxon>
        <taxon>Pseudomonadota</taxon>
        <taxon>Alphaproteobacteria</taxon>
        <taxon>Hyphomicrobiales</taxon>
        <taxon>Rhizobiaceae</taxon>
        <taxon>Sinorhizobium/Ensifer group</taxon>
        <taxon>Sinorhizobium</taxon>
    </lineage>
</organism>
<dbReference type="EMBL" id="CP000738">
    <property type="protein sequence ID" value="ABR61750.1"/>
    <property type="molecule type" value="Genomic_DNA"/>
</dbReference>
<dbReference type="RefSeq" id="WP_012067132.1">
    <property type="nucleotide sequence ID" value="NC_009636.1"/>
</dbReference>
<dbReference type="RefSeq" id="YP_001328585.1">
    <property type="nucleotide sequence ID" value="NC_009636.1"/>
</dbReference>
<dbReference type="SMR" id="A6UDM0"/>
<dbReference type="STRING" id="366394.Smed_2921"/>
<dbReference type="KEGG" id="smd:Smed_2921"/>
<dbReference type="PATRIC" id="fig|366394.8.peg.6138"/>
<dbReference type="eggNOG" id="COG0355">
    <property type="taxonomic scope" value="Bacteria"/>
</dbReference>
<dbReference type="HOGENOM" id="CLU_084338_2_1_5"/>
<dbReference type="OrthoDB" id="9799969at2"/>
<dbReference type="Proteomes" id="UP000001108">
    <property type="component" value="Chromosome"/>
</dbReference>
<dbReference type="GO" id="GO:0005886">
    <property type="term" value="C:plasma membrane"/>
    <property type="evidence" value="ECO:0007669"/>
    <property type="project" value="UniProtKB-SubCell"/>
</dbReference>
<dbReference type="GO" id="GO:0045259">
    <property type="term" value="C:proton-transporting ATP synthase complex"/>
    <property type="evidence" value="ECO:0007669"/>
    <property type="project" value="UniProtKB-KW"/>
</dbReference>
<dbReference type="GO" id="GO:0005524">
    <property type="term" value="F:ATP binding"/>
    <property type="evidence" value="ECO:0007669"/>
    <property type="project" value="UniProtKB-UniRule"/>
</dbReference>
<dbReference type="GO" id="GO:0046933">
    <property type="term" value="F:proton-transporting ATP synthase activity, rotational mechanism"/>
    <property type="evidence" value="ECO:0007669"/>
    <property type="project" value="UniProtKB-UniRule"/>
</dbReference>
<dbReference type="CDD" id="cd12152">
    <property type="entry name" value="F1-ATPase_delta"/>
    <property type="match status" value="1"/>
</dbReference>
<dbReference type="Gene3D" id="2.60.15.10">
    <property type="entry name" value="F0F1 ATP synthase delta/epsilon subunit, N-terminal"/>
    <property type="match status" value="1"/>
</dbReference>
<dbReference type="HAMAP" id="MF_00530">
    <property type="entry name" value="ATP_synth_epsil_bac"/>
    <property type="match status" value="1"/>
</dbReference>
<dbReference type="InterPro" id="IPR001469">
    <property type="entry name" value="ATP_synth_F1_dsu/esu"/>
</dbReference>
<dbReference type="InterPro" id="IPR020546">
    <property type="entry name" value="ATP_synth_F1_dsu/esu_N"/>
</dbReference>
<dbReference type="InterPro" id="IPR036771">
    <property type="entry name" value="ATPsynth_dsu/esu_N"/>
</dbReference>
<dbReference type="NCBIfam" id="TIGR01216">
    <property type="entry name" value="ATP_synt_epsi"/>
    <property type="match status" value="1"/>
</dbReference>
<dbReference type="NCBIfam" id="NF001851">
    <property type="entry name" value="PRK00571.2-4"/>
    <property type="match status" value="1"/>
</dbReference>
<dbReference type="PANTHER" id="PTHR13822">
    <property type="entry name" value="ATP SYNTHASE DELTA/EPSILON CHAIN"/>
    <property type="match status" value="1"/>
</dbReference>
<dbReference type="PANTHER" id="PTHR13822:SF10">
    <property type="entry name" value="ATP SYNTHASE EPSILON CHAIN, CHLOROPLASTIC"/>
    <property type="match status" value="1"/>
</dbReference>
<dbReference type="Pfam" id="PF02823">
    <property type="entry name" value="ATP-synt_DE_N"/>
    <property type="match status" value="1"/>
</dbReference>
<dbReference type="SUPFAM" id="SSF51344">
    <property type="entry name" value="Epsilon subunit of F1F0-ATP synthase N-terminal domain"/>
    <property type="match status" value="1"/>
</dbReference>
<sequence>MAETFNFELVSPERLLVSETVTEVVIPATEGEMTVMANHAPTMTTVRPGVVAVKTAAGNTERYAVFGGFADILPTGCTLLAESAVHVDELDSTVLENRIEAARAELEGASDEKKTRLEQLVAELTKLGEIVIPA</sequence>